<evidence type="ECO:0000250" key="1"/>
<evidence type="ECO:0000250" key="2">
    <source>
        <dbReference type="UniProtKB" id="P27348"/>
    </source>
</evidence>
<evidence type="ECO:0000250" key="3">
    <source>
        <dbReference type="UniProtKB" id="P31946"/>
    </source>
</evidence>
<evidence type="ECO:0000250" key="4">
    <source>
        <dbReference type="UniProtKB" id="P68251"/>
    </source>
</evidence>
<evidence type="ECO:0000250" key="5">
    <source>
        <dbReference type="UniProtKB" id="Q9CQV8"/>
    </source>
</evidence>
<evidence type="ECO:0000305" key="6"/>
<protein>
    <recommendedName>
        <fullName>14-3-3 protein beta/alpha</fullName>
    </recommendedName>
    <component>
        <recommendedName>
            <fullName>14-3-3 protein beta/alpha, N-terminally processed</fullName>
        </recommendedName>
    </component>
</protein>
<sequence length="246" mass="28082">MTMDKSELVQKAKLAEQAERYDDMAAAMKAVTEQGHELSNEERNLLSVAYKNVVGARRSSWRVISSIEQKTERNEKKQQMGKEYREKIEAELQDICNDVLELLDKYLIPNATQPESKVFYLKMKGDYFRYLSEVASGDNKQTTVSNSQQAYQEAFEISKKEMQPTHPIRLGLALNFSVFYYEILNSPEKACSLAKTAFDEAIAELDTLNEESYKDSTLIMQLLRDNLTLWTSENQGDEGDAGEGEN</sequence>
<comment type="function">
    <text evidence="3">Adapter protein implicated in the regulation of a large spectrum of both general and specialized signaling pathways. Binds to a large number of partners, usually by recognition of a phosphoserine or phosphothreonine motif. Binding generally results in the modulation of the activity of the binding partner. Negative regulator of osteogenesis. Blocks the nuclear translocation of the phosphorylated form (by AKT1) of SRPK2 and antagonizes its stimulatory effect on cyclin D1 expression resulting in blockage of neuronal apoptosis elicited by SRPK2. Negative regulator of signaling cascades that mediate activation of MAP kinases via AKAP13.</text>
</comment>
<comment type="subunit">
    <text evidence="3 5">Homodimer (By similarity). Interacts with SAMSN1 and PRKCE (By similarity). Interacts with AKAP13. Interacts with SSH1 and TORC2/CRTC2. Interacts with ABL1; the interaction results in cytoplasmic location of ABL1 and inhibition of cABL-mediated apoptosis. Interacts with ROR2 (dimer); the interaction results in phosphorylation of YWHAB on tyrosine residues. Interacts with GAB2. Interacts with YAP1 (phosphorylated form). Interacts with the phosphorylated (by AKT1) form of SRPK2. Interacts with PKA-phosphorylated AANAT. Interacts with MYO1C. Interacts with SIRT2 (By similarity). Interacts with the 'Thr-369' phosphorylated form of DAPK2 (By similarity). Interacts with PI4KB, TBC1D22A and TBC1D22B. Interacts with the 'Ser-1134' and 'Ser-1161' phosphorylated form of SOS1 (By similarity). Interacts (via phosphorylated form) with YWHAB; this interaction occurs in a protein kinase AKT1-dependent manner (By similarity). Interacts with SLITRK1. Interacts with SYNPO2 (phosphorylated form); YWHAB competes with ACTN2 for interaction with SYNPO2 (By similarity). Interacts with RIPOR2 (via phosphorylated form); this interaction occurs in a chemokine-dependent manner and does not compete for binding of RIPOR2 with RHOA nor blocks inhibition of RIPOR2-mediated RHOA activity (By similarity). Interacts with MARK2 and MARK3 (By similarity). Interacts with TESK1; the interaction is dependent on the phosphorylation of TESK1 'Ser-437' and inhibits TESK1 kinase activity (By similarity). Interacts with MEFV (By similarity). Interacts with HDAC4 (By similarity). Interacts with ADAM22 (via C-terminus) (By similarity).</text>
</comment>
<comment type="subcellular location">
    <subcellularLocation>
        <location evidence="3">Cytoplasm</location>
    </subcellularLocation>
    <subcellularLocation>
        <location evidence="3">Melanosome</location>
    </subcellularLocation>
</comment>
<comment type="alternative products">
    <event type="alternative initiation"/>
    <isoform>
        <id>Q4R572-1</id>
        <name>Long</name>
        <sequence type="displayed"/>
    </isoform>
    <isoform>
        <id>Q4R572-2</id>
        <name>Short</name>
        <sequence type="described" ref="VSP_018633"/>
    </isoform>
</comment>
<comment type="PTM">
    <text evidence="1">The alpha, brain-specific form differs from the beta form in being phosphorylated. Phosphorylated on Ser-60 by protein kinase C delta type catalytic subunit in a sphingosine-dependent fashion.</text>
</comment>
<comment type="PTM">
    <text evidence="1">Isoform Short contains a N-acetylmethionine at position 1.</text>
</comment>
<comment type="miscellaneous">
    <molecule>Isoform Short</molecule>
    <text evidence="6">Inferred by similarity.</text>
</comment>
<comment type="similarity">
    <text evidence="6">Belongs to the 14-3-3 family.</text>
</comment>
<dbReference type="EMBL" id="AB169672">
    <property type="protein sequence ID" value="BAE01753.1"/>
    <property type="molecule type" value="mRNA"/>
</dbReference>
<dbReference type="RefSeq" id="XP_005569168.1">
    <molecule id="Q4R572-1"/>
    <property type="nucleotide sequence ID" value="XM_005569111.4"/>
</dbReference>
<dbReference type="RefSeq" id="XP_005569169.1">
    <molecule id="Q4R572-1"/>
    <property type="nucleotide sequence ID" value="XM_005569112.3"/>
</dbReference>
<dbReference type="RefSeq" id="XP_005569170.1">
    <molecule id="Q4R572-1"/>
    <property type="nucleotide sequence ID" value="XM_005569113.3"/>
</dbReference>
<dbReference type="SMR" id="Q4R572"/>
<dbReference type="IntAct" id="Q4R572">
    <property type="interactions" value="1"/>
</dbReference>
<dbReference type="MINT" id="Q4R572"/>
<dbReference type="STRING" id="9541.ENSMFAP00000023144"/>
<dbReference type="Ensembl" id="ENSMFAT00000073733.1">
    <molecule id="Q4R572-1"/>
    <property type="protein sequence ID" value="ENSMFAP00000053407.1"/>
    <property type="gene ID" value="ENSMFAG00000043236.2"/>
</dbReference>
<dbReference type="GeneID" id="101926442"/>
<dbReference type="KEGG" id="mcf:101926442"/>
<dbReference type="CTD" id="7529"/>
<dbReference type="VEuPathDB" id="HostDB:ENSMFAG00000043236"/>
<dbReference type="eggNOG" id="KOG0841">
    <property type="taxonomic scope" value="Eukaryota"/>
</dbReference>
<dbReference type="GeneTree" id="ENSGT01090000260040"/>
<dbReference type="OMA" id="AECKVFY"/>
<dbReference type="Proteomes" id="UP000233100">
    <property type="component" value="Chromosome 10"/>
</dbReference>
<dbReference type="Bgee" id="ENSMFAG00000043236">
    <property type="expression patterns" value="Expressed in temporal lobe and 13 other cell types or tissues"/>
</dbReference>
<dbReference type="GO" id="GO:0042470">
    <property type="term" value="C:melanosome"/>
    <property type="evidence" value="ECO:0007669"/>
    <property type="project" value="UniProtKB-SubCell"/>
</dbReference>
<dbReference type="GO" id="GO:0042802">
    <property type="term" value="F:identical protein binding"/>
    <property type="evidence" value="ECO:0007669"/>
    <property type="project" value="UniProtKB-ARBA"/>
</dbReference>
<dbReference type="GO" id="GO:0004860">
    <property type="term" value="F:protein kinase inhibitor activity"/>
    <property type="evidence" value="ECO:0000250"/>
    <property type="project" value="UniProtKB"/>
</dbReference>
<dbReference type="GO" id="GO:0045744">
    <property type="term" value="P:negative regulation of G protein-coupled receptor signaling pathway"/>
    <property type="evidence" value="ECO:0000250"/>
    <property type="project" value="UniProtKB"/>
</dbReference>
<dbReference type="CDD" id="cd10022">
    <property type="entry name" value="14-3-3_beta_zeta"/>
    <property type="match status" value="1"/>
</dbReference>
<dbReference type="FunFam" id="1.20.190.20:FF:000001">
    <property type="entry name" value="14-3-3 gamma 1"/>
    <property type="match status" value="1"/>
</dbReference>
<dbReference type="Gene3D" id="1.20.190.20">
    <property type="entry name" value="14-3-3 domain"/>
    <property type="match status" value="1"/>
</dbReference>
<dbReference type="InterPro" id="IPR000308">
    <property type="entry name" value="14-3-3"/>
</dbReference>
<dbReference type="InterPro" id="IPR023409">
    <property type="entry name" value="14-3-3_CS"/>
</dbReference>
<dbReference type="InterPro" id="IPR036815">
    <property type="entry name" value="14-3-3_dom_sf"/>
</dbReference>
<dbReference type="InterPro" id="IPR023410">
    <property type="entry name" value="14-3-3_domain"/>
</dbReference>
<dbReference type="PANTHER" id="PTHR18860">
    <property type="entry name" value="14-3-3 PROTEIN"/>
    <property type="match status" value="1"/>
</dbReference>
<dbReference type="Pfam" id="PF00244">
    <property type="entry name" value="14-3-3"/>
    <property type="match status" value="1"/>
</dbReference>
<dbReference type="PIRSF" id="PIRSF000868">
    <property type="entry name" value="14-3-3"/>
    <property type="match status" value="1"/>
</dbReference>
<dbReference type="PRINTS" id="PR00305">
    <property type="entry name" value="1433ZETA"/>
</dbReference>
<dbReference type="SMART" id="SM00101">
    <property type="entry name" value="14_3_3"/>
    <property type="match status" value="1"/>
</dbReference>
<dbReference type="SUPFAM" id="SSF48445">
    <property type="entry name" value="14-3-3 protein"/>
    <property type="match status" value="1"/>
</dbReference>
<dbReference type="PROSITE" id="PS00796">
    <property type="entry name" value="1433_1"/>
    <property type="match status" value="1"/>
</dbReference>
<dbReference type="PROSITE" id="PS00797">
    <property type="entry name" value="1433_2"/>
    <property type="match status" value="1"/>
</dbReference>
<accession>Q4R572</accession>
<gene>
    <name type="primary">YWHAB</name>
    <name type="ORF">QccE-16215</name>
</gene>
<organism>
    <name type="scientific">Macaca fascicularis</name>
    <name type="common">Crab-eating macaque</name>
    <name type="synonym">Cynomolgus monkey</name>
    <dbReference type="NCBI Taxonomy" id="9541"/>
    <lineage>
        <taxon>Eukaryota</taxon>
        <taxon>Metazoa</taxon>
        <taxon>Chordata</taxon>
        <taxon>Craniata</taxon>
        <taxon>Vertebrata</taxon>
        <taxon>Euteleostomi</taxon>
        <taxon>Mammalia</taxon>
        <taxon>Eutheria</taxon>
        <taxon>Euarchontoglires</taxon>
        <taxon>Primates</taxon>
        <taxon>Haplorrhini</taxon>
        <taxon>Catarrhini</taxon>
        <taxon>Cercopithecidae</taxon>
        <taxon>Cercopithecinae</taxon>
        <taxon>Macaca</taxon>
    </lineage>
</organism>
<name>1433B_MACFA</name>
<keyword id="KW-0007">Acetylation</keyword>
<keyword id="KW-0024">Alternative initiation</keyword>
<keyword id="KW-0963">Cytoplasm</keyword>
<keyword id="KW-1017">Isopeptide bond</keyword>
<keyword id="KW-0944">Nitration</keyword>
<keyword id="KW-0597">Phosphoprotein</keyword>
<keyword id="KW-1185">Reference proteome</keyword>
<keyword id="KW-0832">Ubl conjugation</keyword>
<feature type="chain" id="PRO_0000042983" description="14-3-3 protein beta/alpha">
    <location>
        <begin position="1"/>
        <end position="246"/>
    </location>
</feature>
<feature type="initiator methionine" description="Removed; alternate" evidence="3">
    <location>
        <position position="1"/>
    </location>
</feature>
<feature type="chain" id="PRO_0000367901" description="14-3-3 protein beta/alpha, N-terminally processed">
    <location>
        <begin position="2"/>
        <end position="246"/>
    </location>
</feature>
<feature type="site" description="Interaction with phosphoserine on interacting protein" evidence="1">
    <location>
        <position position="58"/>
    </location>
</feature>
<feature type="site" description="Interaction with phosphoserine on interacting protein" evidence="1">
    <location>
        <position position="129"/>
    </location>
</feature>
<feature type="modified residue" description="N-acetylmethionine" evidence="3">
    <location>
        <position position="1"/>
    </location>
</feature>
<feature type="modified residue" description="N-acetylthreonine; in 14-3-3 protein beta/alpha, N-terminally processed" evidence="3">
    <location>
        <position position="2"/>
    </location>
</feature>
<feature type="modified residue" description="Phosphothreonine" evidence="3">
    <location>
        <position position="2"/>
    </location>
</feature>
<feature type="modified residue" description="N6-acetyllysine" evidence="2">
    <location>
        <position position="5"/>
    </location>
</feature>
<feature type="modified residue" description="N6-acetyllysine; alternate" evidence="2">
    <location>
        <position position="51"/>
    </location>
</feature>
<feature type="modified residue" description="Phosphoserine" evidence="5">
    <location>
        <position position="60"/>
    </location>
</feature>
<feature type="modified residue" description="N6-acetyllysine" evidence="3">
    <location>
        <position position="70"/>
    </location>
</feature>
<feature type="modified residue" description="3'-nitrotyrosine" evidence="5">
    <location>
        <position position="84"/>
    </location>
</feature>
<feature type="modified residue" description="3'-nitrotyrosine" evidence="5">
    <location>
        <position position="106"/>
    </location>
</feature>
<feature type="modified residue" description="N6-acetyllysine" evidence="3">
    <location>
        <position position="117"/>
    </location>
</feature>
<feature type="modified residue" description="Phosphoserine" evidence="4">
    <location>
        <position position="186"/>
    </location>
</feature>
<feature type="modified residue" description="Phosphoserine" evidence="3">
    <location>
        <position position="232"/>
    </location>
</feature>
<feature type="cross-link" description="Glycyl lysine isopeptide (Lys-Gly) (interchain with G-Cter in SUMO2); alternate" evidence="2">
    <location>
        <position position="51"/>
    </location>
</feature>
<feature type="splice variant" id="VSP_018633" description="In isoform Short." evidence="6">
    <location>
        <begin position="1"/>
        <end position="2"/>
    </location>
</feature>
<feature type="modified residue" description="N-acetylmethionine" evidence="6">
    <location sequence="Q4R572-2">
        <position position="1"/>
    </location>
</feature>
<reference key="1">
    <citation type="submission" date="2005-06" db="EMBL/GenBank/DDBJ databases">
        <title>DNA sequences of macaque genes expressed in brain or testis and its evolutionary implications.</title>
        <authorList>
            <consortium name="International consortium for macaque cDNA sequencing and analysis"/>
        </authorList>
    </citation>
    <scope>NUCLEOTIDE SEQUENCE [LARGE SCALE MRNA]</scope>
    <source>
        <tissue>Brain cortex</tissue>
    </source>
</reference>
<proteinExistence type="evidence at transcript level"/>